<reference key="1">
    <citation type="journal article" date="2002" name="Proc. Natl. Acad. Sci. U.S.A.">
        <title>Genome sequence of Streptococcus mutans UA159, a cariogenic dental pathogen.</title>
        <authorList>
            <person name="Ajdic D.J."/>
            <person name="McShan W.M."/>
            <person name="McLaughlin R.E."/>
            <person name="Savic G."/>
            <person name="Chang J."/>
            <person name="Carson M.B."/>
            <person name="Primeaux C."/>
            <person name="Tian R."/>
            <person name="Kenton S."/>
            <person name="Jia H.G."/>
            <person name="Lin S.P."/>
            <person name="Qian Y."/>
            <person name="Li S."/>
            <person name="Zhu H."/>
            <person name="Najar F.Z."/>
            <person name="Lai H."/>
            <person name="White J."/>
            <person name="Roe B.A."/>
            <person name="Ferretti J.J."/>
        </authorList>
    </citation>
    <scope>NUCLEOTIDE SEQUENCE [LARGE SCALE GENOMIC DNA]</scope>
    <source>
        <strain>ATCC 700610 / UA159</strain>
    </source>
</reference>
<protein>
    <recommendedName>
        <fullName evidence="1">ATP-dependent 6-phosphofructokinase</fullName>
        <shortName evidence="1">ATP-PFK</shortName>
        <shortName evidence="1">Phosphofructokinase</shortName>
        <ecNumber evidence="1">2.7.1.11</ecNumber>
    </recommendedName>
    <alternativeName>
        <fullName evidence="1">Phosphohexokinase</fullName>
    </alternativeName>
</protein>
<evidence type="ECO:0000255" key="1">
    <source>
        <dbReference type="HAMAP-Rule" id="MF_00339"/>
    </source>
</evidence>
<proteinExistence type="inferred from homology"/>
<comment type="function">
    <text evidence="1">Catalyzes the phosphorylation of D-fructose 6-phosphate to fructose 1,6-bisphosphate by ATP, the first committing step of glycolysis.</text>
</comment>
<comment type="catalytic activity">
    <reaction evidence="1">
        <text>beta-D-fructose 6-phosphate + ATP = beta-D-fructose 1,6-bisphosphate + ADP + H(+)</text>
        <dbReference type="Rhea" id="RHEA:16109"/>
        <dbReference type="ChEBI" id="CHEBI:15378"/>
        <dbReference type="ChEBI" id="CHEBI:30616"/>
        <dbReference type="ChEBI" id="CHEBI:32966"/>
        <dbReference type="ChEBI" id="CHEBI:57634"/>
        <dbReference type="ChEBI" id="CHEBI:456216"/>
        <dbReference type="EC" id="2.7.1.11"/>
    </reaction>
</comment>
<comment type="cofactor">
    <cofactor evidence="1">
        <name>Mg(2+)</name>
        <dbReference type="ChEBI" id="CHEBI:18420"/>
    </cofactor>
</comment>
<comment type="activity regulation">
    <text evidence="1">Allosterically activated by ADP and other diphosphonucleosides, and allosterically inhibited by phosphoenolpyruvate.</text>
</comment>
<comment type="pathway">
    <text evidence="1">Carbohydrate degradation; glycolysis; D-glyceraldehyde 3-phosphate and glycerone phosphate from D-glucose: step 3/4.</text>
</comment>
<comment type="subunit">
    <text evidence="1">Homotetramer.</text>
</comment>
<comment type="subcellular location">
    <subcellularLocation>
        <location evidence="1">Cytoplasm</location>
    </subcellularLocation>
</comment>
<comment type="similarity">
    <text evidence="1">Belongs to the phosphofructokinase type A (PFKA) family. ATP-dependent PFK group I subfamily. Prokaryotic clade 'B1' sub-subfamily.</text>
</comment>
<feature type="chain" id="PRO_0000111989" description="ATP-dependent 6-phosphofructokinase">
    <location>
        <begin position="1"/>
        <end position="337"/>
    </location>
</feature>
<feature type="active site" description="Proton acceptor" evidence="1">
    <location>
        <position position="127"/>
    </location>
</feature>
<feature type="binding site" evidence="1">
    <location>
        <position position="11"/>
    </location>
    <ligand>
        <name>ATP</name>
        <dbReference type="ChEBI" id="CHEBI:30616"/>
    </ligand>
</feature>
<feature type="binding site" evidence="1">
    <location>
        <begin position="21"/>
        <end position="25"/>
    </location>
    <ligand>
        <name>ADP</name>
        <dbReference type="ChEBI" id="CHEBI:456216"/>
        <note>allosteric activator; ligand shared between dimeric partners</note>
    </ligand>
</feature>
<feature type="binding site" evidence="1">
    <location>
        <begin position="72"/>
        <end position="73"/>
    </location>
    <ligand>
        <name>ATP</name>
        <dbReference type="ChEBI" id="CHEBI:30616"/>
    </ligand>
</feature>
<feature type="binding site" evidence="1">
    <location>
        <begin position="102"/>
        <end position="105"/>
    </location>
    <ligand>
        <name>ATP</name>
        <dbReference type="ChEBI" id="CHEBI:30616"/>
    </ligand>
</feature>
<feature type="binding site" evidence="1">
    <location>
        <position position="103"/>
    </location>
    <ligand>
        <name>Mg(2+)</name>
        <dbReference type="ChEBI" id="CHEBI:18420"/>
        <note>catalytic</note>
    </ligand>
</feature>
<feature type="binding site" description="in other chain" evidence="1">
    <location>
        <begin position="125"/>
        <end position="127"/>
    </location>
    <ligand>
        <name>substrate</name>
        <note>ligand shared between dimeric partners</note>
    </ligand>
</feature>
<feature type="binding site" description="in other chain" evidence="1">
    <location>
        <position position="154"/>
    </location>
    <ligand>
        <name>ADP</name>
        <dbReference type="ChEBI" id="CHEBI:456216"/>
        <note>allosteric activator; ligand shared between dimeric partners</note>
    </ligand>
</feature>
<feature type="binding site" evidence="1">
    <location>
        <position position="162"/>
    </location>
    <ligand>
        <name>substrate</name>
        <note>ligand shared between dimeric partners</note>
    </ligand>
</feature>
<feature type="binding site" description="in other chain" evidence="1">
    <location>
        <begin position="169"/>
        <end position="171"/>
    </location>
    <ligand>
        <name>substrate</name>
        <note>ligand shared between dimeric partners</note>
    </ligand>
</feature>
<feature type="binding site" description="in other chain" evidence="1">
    <location>
        <begin position="185"/>
        <end position="187"/>
    </location>
    <ligand>
        <name>ADP</name>
        <dbReference type="ChEBI" id="CHEBI:456216"/>
        <note>allosteric activator; ligand shared between dimeric partners</note>
    </ligand>
</feature>
<feature type="binding site" description="in other chain" evidence="1">
    <location>
        <begin position="214"/>
        <end position="216"/>
    </location>
    <ligand>
        <name>ADP</name>
        <dbReference type="ChEBI" id="CHEBI:456216"/>
        <note>allosteric activator; ligand shared between dimeric partners</note>
    </ligand>
</feature>
<feature type="binding site" description="in other chain" evidence="1">
    <location>
        <position position="223"/>
    </location>
    <ligand>
        <name>substrate</name>
        <note>ligand shared between dimeric partners</note>
    </ligand>
</feature>
<feature type="binding site" evidence="1">
    <location>
        <position position="245"/>
    </location>
    <ligand>
        <name>substrate</name>
        <note>ligand shared between dimeric partners</note>
    </ligand>
</feature>
<feature type="binding site" description="in other chain" evidence="1">
    <location>
        <begin position="251"/>
        <end position="254"/>
    </location>
    <ligand>
        <name>substrate</name>
        <note>ligand shared between dimeric partners</note>
    </ligand>
</feature>
<name>PFKA_STRMU</name>
<accession>Q8DTX6</accession>
<sequence>MKRIAVLTSGGDAPGMNAAVRAVVRKAISEGMEVCGINRGYAGMVEGDIFPLDAKGVSNILSRGGTFLQSARYPEFAKLEGQLKGIEQLKKHGIEGVVVIGGDGSYHGAMRLTEHGFPAVGLPGTIDNDIVGTDYTIGFDTAVNTATDALDKIRDTSFSHGRTFVVEVMGRNAGDIALWSGIAAGADQIIIPEEPYDIKEVVANVKNGYLSKSKNHHLIVLAEGVMHGEEFAAQMKEAGDNSDLRVTNLGHILRGGAPTPRDRVIASWMGAHAVELLREGKGGLAIGIQNEELVEHPILGSAEDGALFSLTEQGEIVVNNPHKARLDFAALNRDLSN</sequence>
<organism>
    <name type="scientific">Streptococcus mutans serotype c (strain ATCC 700610 / UA159)</name>
    <dbReference type="NCBI Taxonomy" id="210007"/>
    <lineage>
        <taxon>Bacteria</taxon>
        <taxon>Bacillati</taxon>
        <taxon>Bacillota</taxon>
        <taxon>Bacilli</taxon>
        <taxon>Lactobacillales</taxon>
        <taxon>Streptococcaceae</taxon>
        <taxon>Streptococcus</taxon>
    </lineage>
</organism>
<gene>
    <name evidence="1" type="primary">pfkA</name>
    <name type="synonym">pfk</name>
    <name type="ordered locus">SMU_1191</name>
</gene>
<keyword id="KW-0021">Allosteric enzyme</keyword>
<keyword id="KW-0067">ATP-binding</keyword>
<keyword id="KW-0963">Cytoplasm</keyword>
<keyword id="KW-0324">Glycolysis</keyword>
<keyword id="KW-0418">Kinase</keyword>
<keyword id="KW-0460">Magnesium</keyword>
<keyword id="KW-0479">Metal-binding</keyword>
<keyword id="KW-0547">Nucleotide-binding</keyword>
<keyword id="KW-1185">Reference proteome</keyword>
<keyword id="KW-0808">Transferase</keyword>
<dbReference type="EC" id="2.7.1.11" evidence="1"/>
<dbReference type="EMBL" id="AE014133">
    <property type="protein sequence ID" value="AAN58880.1"/>
    <property type="molecule type" value="Genomic_DNA"/>
</dbReference>
<dbReference type="RefSeq" id="NP_721574.1">
    <property type="nucleotide sequence ID" value="NC_004350.2"/>
</dbReference>
<dbReference type="RefSeq" id="WP_002262160.1">
    <property type="nucleotide sequence ID" value="NC_004350.2"/>
</dbReference>
<dbReference type="SMR" id="Q8DTX6"/>
<dbReference type="STRING" id="210007.SMU_1191"/>
<dbReference type="GeneID" id="93859325"/>
<dbReference type="KEGG" id="smu:SMU_1191"/>
<dbReference type="PATRIC" id="fig|210007.7.peg.1068"/>
<dbReference type="eggNOG" id="COG0205">
    <property type="taxonomic scope" value="Bacteria"/>
</dbReference>
<dbReference type="HOGENOM" id="CLU_020655_0_1_9"/>
<dbReference type="OrthoDB" id="9802503at2"/>
<dbReference type="PhylomeDB" id="Q8DTX6"/>
<dbReference type="UniPathway" id="UPA00109">
    <property type="reaction ID" value="UER00182"/>
</dbReference>
<dbReference type="Proteomes" id="UP000002512">
    <property type="component" value="Chromosome"/>
</dbReference>
<dbReference type="GO" id="GO:0005945">
    <property type="term" value="C:6-phosphofructokinase complex"/>
    <property type="evidence" value="ECO:0007669"/>
    <property type="project" value="TreeGrafter"/>
</dbReference>
<dbReference type="GO" id="GO:0003872">
    <property type="term" value="F:6-phosphofructokinase activity"/>
    <property type="evidence" value="ECO:0007669"/>
    <property type="project" value="UniProtKB-UniRule"/>
</dbReference>
<dbReference type="GO" id="GO:0016208">
    <property type="term" value="F:AMP binding"/>
    <property type="evidence" value="ECO:0007669"/>
    <property type="project" value="TreeGrafter"/>
</dbReference>
<dbReference type="GO" id="GO:0005524">
    <property type="term" value="F:ATP binding"/>
    <property type="evidence" value="ECO:0007669"/>
    <property type="project" value="UniProtKB-KW"/>
</dbReference>
<dbReference type="GO" id="GO:0070095">
    <property type="term" value="F:fructose-6-phosphate binding"/>
    <property type="evidence" value="ECO:0007669"/>
    <property type="project" value="TreeGrafter"/>
</dbReference>
<dbReference type="GO" id="GO:0042802">
    <property type="term" value="F:identical protein binding"/>
    <property type="evidence" value="ECO:0007669"/>
    <property type="project" value="TreeGrafter"/>
</dbReference>
<dbReference type="GO" id="GO:0046872">
    <property type="term" value="F:metal ion binding"/>
    <property type="evidence" value="ECO:0007669"/>
    <property type="project" value="UniProtKB-KW"/>
</dbReference>
<dbReference type="GO" id="GO:0048029">
    <property type="term" value="F:monosaccharide binding"/>
    <property type="evidence" value="ECO:0007669"/>
    <property type="project" value="TreeGrafter"/>
</dbReference>
<dbReference type="GO" id="GO:0061621">
    <property type="term" value="P:canonical glycolysis"/>
    <property type="evidence" value="ECO:0007669"/>
    <property type="project" value="TreeGrafter"/>
</dbReference>
<dbReference type="GO" id="GO:0030388">
    <property type="term" value="P:fructose 1,6-bisphosphate metabolic process"/>
    <property type="evidence" value="ECO:0007669"/>
    <property type="project" value="TreeGrafter"/>
</dbReference>
<dbReference type="GO" id="GO:0006002">
    <property type="term" value="P:fructose 6-phosphate metabolic process"/>
    <property type="evidence" value="ECO:0007669"/>
    <property type="project" value="InterPro"/>
</dbReference>
<dbReference type="FunFam" id="3.40.50.450:FF:000001">
    <property type="entry name" value="ATP-dependent 6-phosphofructokinase"/>
    <property type="match status" value="1"/>
</dbReference>
<dbReference type="FunFam" id="3.40.50.460:FF:000002">
    <property type="entry name" value="ATP-dependent 6-phosphofructokinase"/>
    <property type="match status" value="1"/>
</dbReference>
<dbReference type="Gene3D" id="3.40.50.450">
    <property type="match status" value="1"/>
</dbReference>
<dbReference type="Gene3D" id="3.40.50.460">
    <property type="entry name" value="Phosphofructokinase domain"/>
    <property type="match status" value="1"/>
</dbReference>
<dbReference type="HAMAP" id="MF_00339">
    <property type="entry name" value="Phosphofructokinase_I_B1"/>
    <property type="match status" value="1"/>
</dbReference>
<dbReference type="InterPro" id="IPR022953">
    <property type="entry name" value="ATP_PFK"/>
</dbReference>
<dbReference type="InterPro" id="IPR012003">
    <property type="entry name" value="ATP_PFK_prok-type"/>
</dbReference>
<dbReference type="InterPro" id="IPR012828">
    <property type="entry name" value="PFKA_ATP_prok"/>
</dbReference>
<dbReference type="InterPro" id="IPR015912">
    <property type="entry name" value="Phosphofructokinase_CS"/>
</dbReference>
<dbReference type="InterPro" id="IPR000023">
    <property type="entry name" value="Phosphofructokinase_dom"/>
</dbReference>
<dbReference type="InterPro" id="IPR035966">
    <property type="entry name" value="PKF_sf"/>
</dbReference>
<dbReference type="NCBIfam" id="TIGR02482">
    <property type="entry name" value="PFKA_ATP"/>
    <property type="match status" value="1"/>
</dbReference>
<dbReference type="NCBIfam" id="NF002872">
    <property type="entry name" value="PRK03202.1"/>
    <property type="match status" value="1"/>
</dbReference>
<dbReference type="PANTHER" id="PTHR13697:SF4">
    <property type="entry name" value="ATP-DEPENDENT 6-PHOSPHOFRUCTOKINASE"/>
    <property type="match status" value="1"/>
</dbReference>
<dbReference type="PANTHER" id="PTHR13697">
    <property type="entry name" value="PHOSPHOFRUCTOKINASE"/>
    <property type="match status" value="1"/>
</dbReference>
<dbReference type="Pfam" id="PF00365">
    <property type="entry name" value="PFK"/>
    <property type="match status" value="1"/>
</dbReference>
<dbReference type="PIRSF" id="PIRSF000532">
    <property type="entry name" value="ATP_PFK_prok"/>
    <property type="match status" value="1"/>
</dbReference>
<dbReference type="PRINTS" id="PR00476">
    <property type="entry name" value="PHFRCTKINASE"/>
</dbReference>
<dbReference type="SUPFAM" id="SSF53784">
    <property type="entry name" value="Phosphofructokinase"/>
    <property type="match status" value="1"/>
</dbReference>
<dbReference type="PROSITE" id="PS00433">
    <property type="entry name" value="PHOSPHOFRUCTOKINASE"/>
    <property type="match status" value="1"/>
</dbReference>